<proteinExistence type="evidence at protein level"/>
<reference key="1">
    <citation type="submission" date="2000-10" db="EMBL/GenBank/DDBJ databases">
        <title>A new partner gene of the TEL/ETV6, TSL, cloned in acute myeloid leukemia with t(7;12)(p15;p13).</title>
        <authorList>
            <person name="Yuji K."/>
            <person name="Mitani K."/>
            <person name="Ueno H."/>
            <person name="Sato Y."/>
            <person name="Ikawa S."/>
            <person name="Hangaishi A."/>
            <person name="Ogawa S."/>
            <person name="Suzuki T."/>
            <person name="Nakamoto T."/>
            <person name="Qiao Y."/>
            <person name="Hirai H."/>
        </authorList>
    </citation>
    <scope>NUCLEOTIDE SEQUENCE [MRNA]</scope>
</reference>
<reference key="2">
    <citation type="submission" date="2002-07" db="EMBL/GenBank/DDBJ databases">
        <title>Cloning and identification of human gene 1 transactivated by hepatitis C virus NS5A protein.</title>
        <authorList>
            <person name="Liu Y."/>
            <person name="Cheng J."/>
            <person name="Lu Y."/>
            <person name="Wang G."/>
            <person name="Zhang L."/>
            <person name="Chen J."/>
            <person name="Li L."/>
        </authorList>
    </citation>
    <scope>NUCLEOTIDE SEQUENCE [MRNA]</scope>
</reference>
<reference key="3">
    <citation type="journal article" date="2004" name="Nat. Genet.">
        <title>Complete sequencing and characterization of 21,243 full-length human cDNAs.</title>
        <authorList>
            <person name="Ota T."/>
            <person name="Suzuki Y."/>
            <person name="Nishikawa T."/>
            <person name="Otsuki T."/>
            <person name="Sugiyama T."/>
            <person name="Irie R."/>
            <person name="Wakamatsu A."/>
            <person name="Hayashi K."/>
            <person name="Sato H."/>
            <person name="Nagai K."/>
            <person name="Kimura K."/>
            <person name="Makita H."/>
            <person name="Sekine M."/>
            <person name="Obayashi M."/>
            <person name="Nishi T."/>
            <person name="Shibahara T."/>
            <person name="Tanaka T."/>
            <person name="Ishii S."/>
            <person name="Yamamoto J."/>
            <person name="Saito K."/>
            <person name="Kawai Y."/>
            <person name="Isono Y."/>
            <person name="Nakamura Y."/>
            <person name="Nagahari K."/>
            <person name="Murakami K."/>
            <person name="Yasuda T."/>
            <person name="Iwayanagi T."/>
            <person name="Wagatsuma M."/>
            <person name="Shiratori A."/>
            <person name="Sudo H."/>
            <person name="Hosoiri T."/>
            <person name="Kaku Y."/>
            <person name="Kodaira H."/>
            <person name="Kondo H."/>
            <person name="Sugawara M."/>
            <person name="Takahashi M."/>
            <person name="Kanda K."/>
            <person name="Yokoi T."/>
            <person name="Furuya T."/>
            <person name="Kikkawa E."/>
            <person name="Omura Y."/>
            <person name="Abe K."/>
            <person name="Kamihara K."/>
            <person name="Katsuta N."/>
            <person name="Sato K."/>
            <person name="Tanikawa M."/>
            <person name="Yamazaki M."/>
            <person name="Ninomiya K."/>
            <person name="Ishibashi T."/>
            <person name="Yamashita H."/>
            <person name="Murakawa K."/>
            <person name="Fujimori K."/>
            <person name="Tanai H."/>
            <person name="Kimata M."/>
            <person name="Watanabe M."/>
            <person name="Hiraoka S."/>
            <person name="Chiba Y."/>
            <person name="Ishida S."/>
            <person name="Ono Y."/>
            <person name="Takiguchi S."/>
            <person name="Watanabe S."/>
            <person name="Yosida M."/>
            <person name="Hotuta T."/>
            <person name="Kusano J."/>
            <person name="Kanehori K."/>
            <person name="Takahashi-Fujii A."/>
            <person name="Hara H."/>
            <person name="Tanase T.-O."/>
            <person name="Nomura Y."/>
            <person name="Togiya S."/>
            <person name="Komai F."/>
            <person name="Hara R."/>
            <person name="Takeuchi K."/>
            <person name="Arita M."/>
            <person name="Imose N."/>
            <person name="Musashino K."/>
            <person name="Yuuki H."/>
            <person name="Oshima A."/>
            <person name="Sasaki N."/>
            <person name="Aotsuka S."/>
            <person name="Yoshikawa Y."/>
            <person name="Matsunawa H."/>
            <person name="Ichihara T."/>
            <person name="Shiohata N."/>
            <person name="Sano S."/>
            <person name="Moriya S."/>
            <person name="Momiyama H."/>
            <person name="Satoh N."/>
            <person name="Takami S."/>
            <person name="Terashima Y."/>
            <person name="Suzuki O."/>
            <person name="Nakagawa S."/>
            <person name="Senoh A."/>
            <person name="Mizoguchi H."/>
            <person name="Goto Y."/>
            <person name="Shimizu F."/>
            <person name="Wakebe H."/>
            <person name="Hishigaki H."/>
            <person name="Watanabe T."/>
            <person name="Sugiyama A."/>
            <person name="Takemoto M."/>
            <person name="Kawakami B."/>
            <person name="Yamazaki M."/>
            <person name="Watanabe K."/>
            <person name="Kumagai A."/>
            <person name="Itakura S."/>
            <person name="Fukuzumi Y."/>
            <person name="Fujimori Y."/>
            <person name="Komiyama M."/>
            <person name="Tashiro H."/>
            <person name="Tanigami A."/>
            <person name="Fujiwara T."/>
            <person name="Ono T."/>
            <person name="Yamada K."/>
            <person name="Fujii Y."/>
            <person name="Ozaki K."/>
            <person name="Hirao M."/>
            <person name="Ohmori Y."/>
            <person name="Kawabata A."/>
            <person name="Hikiji T."/>
            <person name="Kobatake N."/>
            <person name="Inagaki H."/>
            <person name="Ikema Y."/>
            <person name="Okamoto S."/>
            <person name="Okitani R."/>
            <person name="Kawakami T."/>
            <person name="Noguchi S."/>
            <person name="Itoh T."/>
            <person name="Shigeta K."/>
            <person name="Senba T."/>
            <person name="Matsumura K."/>
            <person name="Nakajima Y."/>
            <person name="Mizuno T."/>
            <person name="Morinaga M."/>
            <person name="Sasaki M."/>
            <person name="Togashi T."/>
            <person name="Oyama M."/>
            <person name="Hata H."/>
            <person name="Watanabe M."/>
            <person name="Komatsu T."/>
            <person name="Mizushima-Sugano J."/>
            <person name="Satoh T."/>
            <person name="Shirai Y."/>
            <person name="Takahashi Y."/>
            <person name="Nakagawa K."/>
            <person name="Okumura K."/>
            <person name="Nagase T."/>
            <person name="Nomura N."/>
            <person name="Kikuchi H."/>
            <person name="Masuho Y."/>
            <person name="Yamashita R."/>
            <person name="Nakai K."/>
            <person name="Yada T."/>
            <person name="Nakamura Y."/>
            <person name="Ohara O."/>
            <person name="Isogai T."/>
            <person name="Sugano S."/>
        </authorList>
    </citation>
    <scope>NUCLEOTIDE SEQUENCE [LARGE SCALE MRNA]</scope>
    <source>
        <tissue>Testis</tissue>
    </source>
</reference>
<reference key="4">
    <citation type="journal article" date="2003" name="Nature">
        <title>The DNA sequence of human chromosome 7.</title>
        <authorList>
            <person name="Hillier L.W."/>
            <person name="Fulton R.S."/>
            <person name="Fulton L.A."/>
            <person name="Graves T.A."/>
            <person name="Pepin K.H."/>
            <person name="Wagner-McPherson C."/>
            <person name="Layman D."/>
            <person name="Maas J."/>
            <person name="Jaeger S."/>
            <person name="Walker R."/>
            <person name="Wylie K."/>
            <person name="Sekhon M."/>
            <person name="Becker M.C."/>
            <person name="O'Laughlin M.D."/>
            <person name="Schaller M.E."/>
            <person name="Fewell G.A."/>
            <person name="Delehaunty K.D."/>
            <person name="Miner T.L."/>
            <person name="Nash W.E."/>
            <person name="Cordes M."/>
            <person name="Du H."/>
            <person name="Sun H."/>
            <person name="Edwards J."/>
            <person name="Bradshaw-Cordum H."/>
            <person name="Ali J."/>
            <person name="Andrews S."/>
            <person name="Isak A."/>
            <person name="Vanbrunt A."/>
            <person name="Nguyen C."/>
            <person name="Du F."/>
            <person name="Lamar B."/>
            <person name="Courtney L."/>
            <person name="Kalicki J."/>
            <person name="Ozersky P."/>
            <person name="Bielicki L."/>
            <person name="Scott K."/>
            <person name="Holmes A."/>
            <person name="Harkins R."/>
            <person name="Harris A."/>
            <person name="Strong C.M."/>
            <person name="Hou S."/>
            <person name="Tomlinson C."/>
            <person name="Dauphin-Kohlberg S."/>
            <person name="Kozlowicz-Reilly A."/>
            <person name="Leonard S."/>
            <person name="Rohlfing T."/>
            <person name="Rock S.M."/>
            <person name="Tin-Wollam A.-M."/>
            <person name="Abbott A."/>
            <person name="Minx P."/>
            <person name="Maupin R."/>
            <person name="Strowmatt C."/>
            <person name="Latreille P."/>
            <person name="Miller N."/>
            <person name="Johnson D."/>
            <person name="Murray J."/>
            <person name="Woessner J.P."/>
            <person name="Wendl M.C."/>
            <person name="Yang S.-P."/>
            <person name="Schultz B.R."/>
            <person name="Wallis J.W."/>
            <person name="Spieth J."/>
            <person name="Bieri T.A."/>
            <person name="Nelson J.O."/>
            <person name="Berkowicz N."/>
            <person name="Wohldmann P.E."/>
            <person name="Cook L.L."/>
            <person name="Hickenbotham M.T."/>
            <person name="Eldred J."/>
            <person name="Williams D."/>
            <person name="Bedell J.A."/>
            <person name="Mardis E.R."/>
            <person name="Clifton S.W."/>
            <person name="Chissoe S.L."/>
            <person name="Marra M.A."/>
            <person name="Raymond C."/>
            <person name="Haugen E."/>
            <person name="Gillett W."/>
            <person name="Zhou Y."/>
            <person name="James R."/>
            <person name="Phelps K."/>
            <person name="Iadanoto S."/>
            <person name="Bubb K."/>
            <person name="Simms E."/>
            <person name="Levy R."/>
            <person name="Clendenning J."/>
            <person name="Kaul R."/>
            <person name="Kent W.J."/>
            <person name="Furey T.S."/>
            <person name="Baertsch R.A."/>
            <person name="Brent M.R."/>
            <person name="Keibler E."/>
            <person name="Flicek P."/>
            <person name="Bork P."/>
            <person name="Suyama M."/>
            <person name="Bailey J.A."/>
            <person name="Portnoy M.E."/>
            <person name="Torrents D."/>
            <person name="Chinwalla A.T."/>
            <person name="Gish W.R."/>
            <person name="Eddy S.R."/>
            <person name="McPherson J.D."/>
            <person name="Olson M.V."/>
            <person name="Eichler E.E."/>
            <person name="Green E.D."/>
            <person name="Waterston R.H."/>
            <person name="Wilson R.K."/>
        </authorList>
    </citation>
    <scope>NUCLEOTIDE SEQUENCE [LARGE SCALE GENOMIC DNA]</scope>
</reference>
<reference key="5">
    <citation type="submission" date="2005-07" db="EMBL/GenBank/DDBJ databases">
        <authorList>
            <person name="Mural R.J."/>
            <person name="Istrail S."/>
            <person name="Sutton G.G."/>
            <person name="Florea L."/>
            <person name="Halpern A.L."/>
            <person name="Mobarry C.M."/>
            <person name="Lippert R."/>
            <person name="Walenz B."/>
            <person name="Shatkay H."/>
            <person name="Dew I."/>
            <person name="Miller J.R."/>
            <person name="Flanigan M.J."/>
            <person name="Edwards N.J."/>
            <person name="Bolanos R."/>
            <person name="Fasulo D."/>
            <person name="Halldorsson B.V."/>
            <person name="Hannenhalli S."/>
            <person name="Turner R."/>
            <person name="Yooseph S."/>
            <person name="Lu F."/>
            <person name="Nusskern D.R."/>
            <person name="Shue B.C."/>
            <person name="Zheng X.H."/>
            <person name="Zhong F."/>
            <person name="Delcher A.L."/>
            <person name="Huson D.H."/>
            <person name="Kravitz S.A."/>
            <person name="Mouchard L."/>
            <person name="Reinert K."/>
            <person name="Remington K.A."/>
            <person name="Clark A.G."/>
            <person name="Waterman M.S."/>
            <person name="Eichler E.E."/>
            <person name="Adams M.D."/>
            <person name="Hunkapiller M.W."/>
            <person name="Myers E.W."/>
            <person name="Venter J.C."/>
        </authorList>
    </citation>
    <scope>NUCLEOTIDE SEQUENCE [LARGE SCALE GENOMIC DNA]</scope>
</reference>
<reference key="6">
    <citation type="journal article" date="2004" name="Genome Res.">
        <title>The status, quality, and expansion of the NIH full-length cDNA project: the Mammalian Gene Collection (MGC).</title>
        <authorList>
            <consortium name="The MGC Project Team"/>
        </authorList>
    </citation>
    <scope>NUCLEOTIDE SEQUENCE [LARGE SCALE MRNA]</scope>
    <source>
        <tissue>Lung</tissue>
    </source>
</reference>
<reference key="7">
    <citation type="journal article" date="1993" name="Electrophoresis">
        <title>Human liver protein map: update 1993.</title>
        <authorList>
            <person name="Hughes G.J."/>
            <person name="Frutiger S."/>
            <person name="Paquet N."/>
            <person name="Pasquali C."/>
            <person name="Sanchez J.-C."/>
            <person name="Tissot J.-D."/>
            <person name="Bairoch A."/>
            <person name="Appel R.D."/>
            <person name="Hochstrasser D.F."/>
        </authorList>
    </citation>
    <scope>PROTEIN SEQUENCE OF 37-47</scope>
    <source>
        <tissue>Liver</tissue>
    </source>
</reference>
<reference key="8">
    <citation type="journal article" date="2006" name="Mol. Genet. Metab.">
        <title>Clinical, biochemical, and molecular findings in three patients with 3-hydroxyisobutyric aciduria.</title>
        <authorList>
            <person name="Loupatty F.J."/>
            <person name="van der Steen A."/>
            <person name="Ijlst L."/>
            <person name="Ruiter J.P."/>
            <person name="Ofman R."/>
            <person name="Baumgartner M.R."/>
            <person name="Ballhausen D."/>
            <person name="Yamaguchi S."/>
            <person name="Duran M."/>
            <person name="Wanders R.J."/>
        </authorList>
    </citation>
    <scope>CATALYTIC ACTIVITY</scope>
    <scope>PATHWAY</scope>
    <scope>TISSUE SPECIFICITY</scope>
</reference>
<reference key="9">
    <citation type="journal article" date="2011" name="BMC Syst. Biol.">
        <title>Initial characterization of the human central proteome.</title>
        <authorList>
            <person name="Burkard T.R."/>
            <person name="Planyavsky M."/>
            <person name="Kaupe I."/>
            <person name="Breitwieser F.P."/>
            <person name="Buerckstuemmer T."/>
            <person name="Bennett K.L."/>
            <person name="Superti-Furga G."/>
            <person name="Colinge J."/>
        </authorList>
    </citation>
    <scope>IDENTIFICATION BY MASS SPECTROMETRY [LARGE SCALE ANALYSIS]</scope>
</reference>
<reference key="10">
    <citation type="journal article" date="2014" name="J. Proteomics">
        <title>An enzyme assisted RP-RPLC approach for in-depth analysis of human liver phosphoproteome.</title>
        <authorList>
            <person name="Bian Y."/>
            <person name="Song C."/>
            <person name="Cheng K."/>
            <person name="Dong M."/>
            <person name="Wang F."/>
            <person name="Huang J."/>
            <person name="Sun D."/>
            <person name="Wang L."/>
            <person name="Ye M."/>
            <person name="Zou H."/>
        </authorList>
    </citation>
    <scope>IDENTIFICATION BY MASS SPECTROMETRY [LARGE SCALE ANALYSIS]</scope>
    <source>
        <tissue>Liver</tissue>
    </source>
</reference>
<reference key="11">
    <citation type="journal article" date="2015" name="Proteomics">
        <title>N-terminome analysis of the human mitochondrial proteome.</title>
        <authorList>
            <person name="Vaca Jacome A.S."/>
            <person name="Rabilloud T."/>
            <person name="Schaeffer-Reiss C."/>
            <person name="Rompais M."/>
            <person name="Ayoub D."/>
            <person name="Lane L."/>
            <person name="Bairoch A."/>
            <person name="Van Dorsselaer A."/>
            <person name="Carapito C."/>
        </authorList>
    </citation>
    <scope>IDENTIFICATION BY MASS SPECTROMETRY [LARGE SCALE ANALYSIS]</scope>
</reference>
<reference key="12">
    <citation type="submission" date="2006-04" db="PDB data bank">
        <title>Crystal structure of human hydroxyisobutyrate dehydrogenase.</title>
        <authorList>
            <consortium name="Structural genomics consortium (SGC)"/>
        </authorList>
    </citation>
    <scope>X-RAY CRYSTALLOGRAPHY (2.38 ANGSTROMS) OF 41-335 OF APOPROTEIN AND IN COMPLEX WITH NADH</scope>
</reference>
<protein>
    <recommendedName>
        <fullName>3-hydroxyisobutyrate dehydrogenase, mitochondrial</fullName>
        <shortName>HIBADH</shortName>
        <ecNumber>1.1.1.31</ecNumber>
    </recommendedName>
</protein>
<organism>
    <name type="scientific">Homo sapiens</name>
    <name type="common">Human</name>
    <dbReference type="NCBI Taxonomy" id="9606"/>
    <lineage>
        <taxon>Eukaryota</taxon>
        <taxon>Metazoa</taxon>
        <taxon>Chordata</taxon>
        <taxon>Craniata</taxon>
        <taxon>Vertebrata</taxon>
        <taxon>Euteleostomi</taxon>
        <taxon>Mammalia</taxon>
        <taxon>Eutheria</taxon>
        <taxon>Euarchontoglires</taxon>
        <taxon>Primates</taxon>
        <taxon>Haplorrhini</taxon>
        <taxon>Catarrhini</taxon>
        <taxon>Hominidae</taxon>
        <taxon>Homo</taxon>
    </lineage>
</organism>
<accession>P31937</accession>
<accession>Q546Z2</accession>
<accession>Q9UDN3</accession>
<name>3HIDH_HUMAN</name>
<dbReference type="EC" id="1.1.1.31"/>
<dbReference type="EMBL" id="AF529362">
    <property type="protein sequence ID" value="AAQ09596.1"/>
    <property type="molecule type" value="mRNA"/>
</dbReference>
<dbReference type="EMBL" id="AB050000">
    <property type="protein sequence ID" value="BAF42045.1"/>
    <property type="molecule type" value="mRNA"/>
</dbReference>
<dbReference type="EMBL" id="AK316605">
    <property type="protein sequence ID" value="BAG38192.1"/>
    <property type="molecule type" value="mRNA"/>
</dbReference>
<dbReference type="EMBL" id="AC007130">
    <property type="status" value="NOT_ANNOTATED_CDS"/>
    <property type="molecule type" value="Genomic_DNA"/>
</dbReference>
<dbReference type="EMBL" id="AC005091">
    <property type="status" value="NOT_ANNOTATED_CDS"/>
    <property type="molecule type" value="Genomic_DNA"/>
</dbReference>
<dbReference type="EMBL" id="CH236948">
    <property type="protein sequence ID" value="EAL24214.1"/>
    <property type="molecule type" value="Genomic_DNA"/>
</dbReference>
<dbReference type="EMBL" id="CH471073">
    <property type="protein sequence ID" value="EAW93897.1"/>
    <property type="molecule type" value="Genomic_DNA"/>
</dbReference>
<dbReference type="EMBL" id="BC032324">
    <property type="protein sequence ID" value="AAH32324.1"/>
    <property type="molecule type" value="mRNA"/>
</dbReference>
<dbReference type="CCDS" id="CCDS5414.1"/>
<dbReference type="RefSeq" id="NP_689953.1">
    <property type="nucleotide sequence ID" value="NM_152740.4"/>
</dbReference>
<dbReference type="PDB" id="2GF2">
    <property type="method" value="X-ray"/>
    <property type="resolution" value="2.38 A"/>
    <property type="chains" value="A/B/C/D=41-335"/>
</dbReference>
<dbReference type="PDB" id="2I9P">
    <property type="method" value="X-ray"/>
    <property type="resolution" value="2.55 A"/>
    <property type="chains" value="A/B/C/D=41-336"/>
</dbReference>
<dbReference type="PDBsum" id="2GF2"/>
<dbReference type="PDBsum" id="2I9P"/>
<dbReference type="SMR" id="P31937"/>
<dbReference type="BioGRID" id="116289">
    <property type="interactions" value="94"/>
</dbReference>
<dbReference type="FunCoup" id="P31937">
    <property type="interactions" value="1462"/>
</dbReference>
<dbReference type="IntAct" id="P31937">
    <property type="interactions" value="53"/>
</dbReference>
<dbReference type="STRING" id="9606.ENSP00000265395"/>
<dbReference type="ChEMBL" id="CHEMBL4523215"/>
<dbReference type="DrugBank" id="DB00157">
    <property type="generic name" value="NADH"/>
</dbReference>
<dbReference type="GlyGen" id="P31937">
    <property type="glycosylation" value="3 sites, 1 O-linked glycan (3 sites)"/>
</dbReference>
<dbReference type="iPTMnet" id="P31937"/>
<dbReference type="PhosphoSitePlus" id="P31937"/>
<dbReference type="SwissPalm" id="P31937"/>
<dbReference type="BioMuta" id="HIBADH"/>
<dbReference type="DMDM" id="12643395"/>
<dbReference type="CPTAC" id="CPTAC-520"/>
<dbReference type="CPTAC" id="CPTAC-521"/>
<dbReference type="jPOST" id="P31937"/>
<dbReference type="MassIVE" id="P31937"/>
<dbReference type="PaxDb" id="9606-ENSP00000265395"/>
<dbReference type="PeptideAtlas" id="P31937"/>
<dbReference type="ProteomicsDB" id="54804"/>
<dbReference type="Pumba" id="P31937"/>
<dbReference type="Antibodypedia" id="12430">
    <property type="antibodies" value="276 antibodies from 32 providers"/>
</dbReference>
<dbReference type="DNASU" id="11112"/>
<dbReference type="Ensembl" id="ENST00000265395.7">
    <property type="protein sequence ID" value="ENSP00000265395.2"/>
    <property type="gene ID" value="ENSG00000106049.9"/>
</dbReference>
<dbReference type="GeneID" id="11112"/>
<dbReference type="KEGG" id="hsa:11112"/>
<dbReference type="MANE-Select" id="ENST00000265395.7">
    <property type="protein sequence ID" value="ENSP00000265395.2"/>
    <property type="RefSeq nucleotide sequence ID" value="NM_152740.4"/>
    <property type="RefSeq protein sequence ID" value="NP_689953.1"/>
</dbReference>
<dbReference type="UCSC" id="uc003szf.4">
    <property type="organism name" value="human"/>
</dbReference>
<dbReference type="AGR" id="HGNC:4907"/>
<dbReference type="CTD" id="11112"/>
<dbReference type="DisGeNET" id="11112"/>
<dbReference type="GeneCards" id="HIBADH"/>
<dbReference type="HGNC" id="HGNC:4907">
    <property type="gene designation" value="HIBADH"/>
</dbReference>
<dbReference type="HPA" id="ENSG00000106049">
    <property type="expression patterns" value="Low tissue specificity"/>
</dbReference>
<dbReference type="MalaCards" id="HIBADH"/>
<dbReference type="MIM" id="608475">
    <property type="type" value="gene"/>
</dbReference>
<dbReference type="neXtProt" id="NX_P31937"/>
<dbReference type="OpenTargets" id="ENSG00000106049"/>
<dbReference type="PharmGKB" id="PA29280"/>
<dbReference type="VEuPathDB" id="HostDB:ENSG00000106049"/>
<dbReference type="eggNOG" id="KOG0409">
    <property type="taxonomic scope" value="Eukaryota"/>
</dbReference>
<dbReference type="GeneTree" id="ENSGT00940000155255"/>
<dbReference type="HOGENOM" id="CLU_035117_6_0_1"/>
<dbReference type="InParanoid" id="P31937"/>
<dbReference type="OMA" id="MGKKVWH"/>
<dbReference type="OrthoDB" id="435038at2759"/>
<dbReference type="PAN-GO" id="P31937">
    <property type="GO annotations" value="3 GO annotations based on evolutionary models"/>
</dbReference>
<dbReference type="PhylomeDB" id="P31937"/>
<dbReference type="TreeFam" id="TF314043"/>
<dbReference type="PathwayCommons" id="P31937"/>
<dbReference type="Reactome" id="R-HSA-70895">
    <property type="pathway name" value="Branched-chain amino acid catabolism"/>
</dbReference>
<dbReference type="SABIO-RK" id="P31937"/>
<dbReference type="SignaLink" id="P31937"/>
<dbReference type="UniPathway" id="UPA00362"/>
<dbReference type="BioGRID-ORCS" id="11112">
    <property type="hits" value="16 hits in 1159 CRISPR screens"/>
</dbReference>
<dbReference type="ChiTaRS" id="HIBADH">
    <property type="organism name" value="human"/>
</dbReference>
<dbReference type="EvolutionaryTrace" id="P31937"/>
<dbReference type="GeneWiki" id="3-hydroxyisobutyrate_dehydrogenase"/>
<dbReference type="GenomeRNAi" id="11112"/>
<dbReference type="Pharos" id="P31937">
    <property type="development level" value="Tbio"/>
</dbReference>
<dbReference type="PRO" id="PR:P31937"/>
<dbReference type="Proteomes" id="UP000005640">
    <property type="component" value="Chromosome 7"/>
</dbReference>
<dbReference type="RNAct" id="P31937">
    <property type="molecule type" value="protein"/>
</dbReference>
<dbReference type="Bgee" id="ENSG00000106049">
    <property type="expression patterns" value="Expressed in kidney epithelium and 190 other cell types or tissues"/>
</dbReference>
<dbReference type="ExpressionAtlas" id="P31937">
    <property type="expression patterns" value="baseline and differential"/>
</dbReference>
<dbReference type="GO" id="GO:0005759">
    <property type="term" value="C:mitochondrial matrix"/>
    <property type="evidence" value="ECO:0000304"/>
    <property type="project" value="Reactome"/>
</dbReference>
<dbReference type="GO" id="GO:0005739">
    <property type="term" value="C:mitochondrion"/>
    <property type="evidence" value="ECO:0006056"/>
    <property type="project" value="FlyBase"/>
</dbReference>
<dbReference type="GO" id="GO:0008442">
    <property type="term" value="F:3-hydroxyisobutyrate dehydrogenase activity"/>
    <property type="evidence" value="ECO:0000314"/>
    <property type="project" value="UniProtKB"/>
</dbReference>
<dbReference type="GO" id="GO:0051287">
    <property type="term" value="F:NAD binding"/>
    <property type="evidence" value="ECO:0007669"/>
    <property type="project" value="InterPro"/>
</dbReference>
<dbReference type="GO" id="GO:0050661">
    <property type="term" value="F:NADP binding"/>
    <property type="evidence" value="ECO:0007669"/>
    <property type="project" value="InterPro"/>
</dbReference>
<dbReference type="GO" id="GO:0006574">
    <property type="term" value="P:valine catabolic process"/>
    <property type="evidence" value="ECO:0000314"/>
    <property type="project" value="UniProtKB"/>
</dbReference>
<dbReference type="FunFam" id="1.10.1040.10:FF:000006">
    <property type="entry name" value="3-hydroxyisobutyrate dehydrogenase"/>
    <property type="match status" value="1"/>
</dbReference>
<dbReference type="FunFam" id="3.40.50.720:FF:000119">
    <property type="entry name" value="3-hydroxyisobutyrate dehydrogenase"/>
    <property type="match status" value="1"/>
</dbReference>
<dbReference type="Gene3D" id="1.10.1040.10">
    <property type="entry name" value="N-(1-d-carboxylethyl)-l-norvaline Dehydrogenase, domain 2"/>
    <property type="match status" value="1"/>
</dbReference>
<dbReference type="Gene3D" id="3.40.50.720">
    <property type="entry name" value="NAD(P)-binding Rossmann-like Domain"/>
    <property type="match status" value="1"/>
</dbReference>
<dbReference type="InterPro" id="IPR002204">
    <property type="entry name" value="3-OH-isobutyrate_DH-rel_CS"/>
</dbReference>
<dbReference type="InterPro" id="IPR008927">
    <property type="entry name" value="6-PGluconate_DH-like_C_sf"/>
</dbReference>
<dbReference type="InterPro" id="IPR013328">
    <property type="entry name" value="6PGD_dom2"/>
</dbReference>
<dbReference type="InterPro" id="IPR006115">
    <property type="entry name" value="6PGDH_NADP-bd"/>
</dbReference>
<dbReference type="InterPro" id="IPR011548">
    <property type="entry name" value="HIBADH"/>
</dbReference>
<dbReference type="InterPro" id="IPR029154">
    <property type="entry name" value="HIBADH-like_NADP-bd"/>
</dbReference>
<dbReference type="InterPro" id="IPR015815">
    <property type="entry name" value="HIBADH-related"/>
</dbReference>
<dbReference type="InterPro" id="IPR036291">
    <property type="entry name" value="NAD(P)-bd_dom_sf"/>
</dbReference>
<dbReference type="NCBIfam" id="TIGR01692">
    <property type="entry name" value="HIBADH"/>
    <property type="match status" value="1"/>
</dbReference>
<dbReference type="PANTHER" id="PTHR22981:SF7">
    <property type="entry name" value="3-HYDROXYISOBUTYRATE DEHYDROGENASE, MITOCHONDRIAL"/>
    <property type="match status" value="1"/>
</dbReference>
<dbReference type="PANTHER" id="PTHR22981">
    <property type="entry name" value="3-HYDROXYISOBUTYRATE DEHYDROGENASE-RELATED"/>
    <property type="match status" value="1"/>
</dbReference>
<dbReference type="Pfam" id="PF14833">
    <property type="entry name" value="NAD_binding_11"/>
    <property type="match status" value="1"/>
</dbReference>
<dbReference type="Pfam" id="PF03446">
    <property type="entry name" value="NAD_binding_2"/>
    <property type="match status" value="1"/>
</dbReference>
<dbReference type="PIRSF" id="PIRSF000103">
    <property type="entry name" value="HIBADH"/>
    <property type="match status" value="1"/>
</dbReference>
<dbReference type="SUPFAM" id="SSF48179">
    <property type="entry name" value="6-phosphogluconate dehydrogenase C-terminal domain-like"/>
    <property type="match status" value="1"/>
</dbReference>
<dbReference type="SUPFAM" id="SSF51735">
    <property type="entry name" value="NAD(P)-binding Rossmann-fold domains"/>
    <property type="match status" value="1"/>
</dbReference>
<dbReference type="PROSITE" id="PS00895">
    <property type="entry name" value="3_HYDROXYISOBUT_DH"/>
    <property type="match status" value="1"/>
</dbReference>
<gene>
    <name type="primary">HIBADH</name>
</gene>
<sequence>MAASLRLLGAASGLRYWSRRLRPAAGSFAAVCSRSVASKTPVGFIGLGNMGNPMAKNLMKHGYPLIIYDVFPDACKEFQDAGEQVVSSPADVAEKADRIITMLPTSINAIEAYSGANGILKKVKKGSLLIDSSTIDPAVSKELAKEVEKMGAVFMDAPVSGGVGAARSGNLTFMVGGVEDEFAAAQELLGCMGSNVVYCGAVGTGQAAKICNNMLLAISMIGTAEAMNLGIRLGLDPKLLAKILNMSSGRCWSSDTYNPVPGVMDGVPSANNYQGGFGTTLMAKDLGLAQDSATSTKSPILLGSLAHQIYRMMCAKGYSKKDFSSVFQFLREEETF</sequence>
<keyword id="KW-0002">3D-structure</keyword>
<keyword id="KW-0007">Acetylation</keyword>
<keyword id="KW-0101">Branched-chain amino acid catabolism</keyword>
<keyword id="KW-0903">Direct protein sequencing</keyword>
<keyword id="KW-0496">Mitochondrion</keyword>
<keyword id="KW-0520">NAD</keyword>
<keyword id="KW-0560">Oxidoreductase</keyword>
<keyword id="KW-1267">Proteomics identification</keyword>
<keyword id="KW-1185">Reference proteome</keyword>
<keyword id="KW-0809">Transit peptide</keyword>
<feature type="transit peptide" description="Mitochondrion" evidence="4">
    <location>
        <begin position="1"/>
        <end position="36"/>
    </location>
</feature>
<feature type="chain" id="PRO_0000007158" description="3-hydroxyisobutyrate dehydrogenase, mitochondrial">
    <location>
        <begin position="37"/>
        <end position="336"/>
    </location>
</feature>
<feature type="active site" evidence="1">
    <location>
        <position position="209"/>
    </location>
</feature>
<feature type="binding site" evidence="5">
    <location>
        <begin position="40"/>
        <end position="68"/>
    </location>
    <ligand>
        <name>NAD(+)</name>
        <dbReference type="ChEBI" id="CHEBI:57540"/>
    </ligand>
</feature>
<feature type="binding site" evidence="5">
    <location>
        <begin position="103"/>
        <end position="104"/>
    </location>
    <ligand>
        <name>NAD(+)</name>
        <dbReference type="ChEBI" id="CHEBI:57540"/>
    </ligand>
</feature>
<feature type="binding site" evidence="5">
    <location>
        <position position="108"/>
    </location>
    <ligand>
        <name>NAD(+)</name>
        <dbReference type="ChEBI" id="CHEBI:57540"/>
    </ligand>
</feature>
<feature type="binding site" evidence="5">
    <location>
        <position position="134"/>
    </location>
    <ligand>
        <name>NAD(+)</name>
        <dbReference type="ChEBI" id="CHEBI:57540"/>
    </ligand>
</feature>
<feature type="binding site" evidence="5">
    <location>
        <position position="284"/>
    </location>
    <ligand>
        <name>NAD(+)</name>
        <dbReference type="ChEBI" id="CHEBI:57540"/>
    </ligand>
</feature>
<feature type="modified residue" description="N6-acetyllysine; alternate" evidence="2">
    <location>
        <position position="60"/>
    </location>
</feature>
<feature type="modified residue" description="N6-succinyllysine; alternate" evidence="2">
    <location>
        <position position="60"/>
    </location>
</feature>
<feature type="modified residue" description="N6-acetyllysine; alternate" evidence="2">
    <location>
        <position position="76"/>
    </location>
</feature>
<feature type="modified residue" description="N6-succinyllysine; alternate" evidence="2">
    <location>
        <position position="76"/>
    </location>
</feature>
<feature type="modified residue" description="N6-succinyllysine" evidence="2">
    <location>
        <position position="95"/>
    </location>
</feature>
<feature type="modified residue" description="N6-acetyllysine" evidence="2">
    <location>
        <position position="121"/>
    </location>
</feature>
<feature type="modified residue" description="N6-succinyllysine" evidence="2">
    <location>
        <position position="141"/>
    </location>
</feature>
<feature type="modified residue" description="N6-acetyllysine" evidence="2">
    <location>
        <position position="145"/>
    </location>
</feature>
<feature type="modified residue" description="N6-acetyllysine; alternate" evidence="2">
    <location>
        <position position="149"/>
    </location>
</feature>
<feature type="modified residue" description="N6-succinyllysine; alternate" evidence="2">
    <location>
        <position position="149"/>
    </location>
</feature>
<feature type="modified residue" description="N6-acetyllysine; alternate" evidence="2">
    <location>
        <position position="238"/>
    </location>
</feature>
<feature type="modified residue" description="N6-succinyllysine; alternate" evidence="2">
    <location>
        <position position="238"/>
    </location>
</feature>
<feature type="modified residue" description="N6-acetyllysine; alternate" evidence="2">
    <location>
        <position position="242"/>
    </location>
</feature>
<feature type="modified residue" description="N6-succinyllysine; alternate" evidence="2">
    <location>
        <position position="242"/>
    </location>
</feature>
<feature type="modified residue" description="N6-succinyllysine" evidence="2">
    <location>
        <position position="297"/>
    </location>
</feature>
<feature type="modified residue" description="N6-acetyllysine; alternate" evidence="2">
    <location>
        <position position="321"/>
    </location>
</feature>
<feature type="modified residue" description="N6-succinyllysine; alternate" evidence="2">
    <location>
        <position position="321"/>
    </location>
</feature>
<feature type="strand" evidence="7">
    <location>
        <begin position="42"/>
        <end position="45"/>
    </location>
</feature>
<feature type="helix" evidence="7">
    <location>
        <begin position="51"/>
        <end position="60"/>
    </location>
</feature>
<feature type="strand" evidence="7">
    <location>
        <begin position="65"/>
        <end position="68"/>
    </location>
</feature>
<feature type="helix" evidence="7">
    <location>
        <begin position="73"/>
        <end position="79"/>
    </location>
</feature>
<feature type="turn" evidence="7">
    <location>
        <begin position="80"/>
        <end position="82"/>
    </location>
</feature>
<feature type="helix" evidence="7">
    <location>
        <begin position="89"/>
        <end position="95"/>
    </location>
</feature>
<feature type="strand" evidence="7">
    <location>
        <begin position="97"/>
        <end position="101"/>
    </location>
</feature>
<feature type="helix" evidence="7">
    <location>
        <begin position="106"/>
        <end position="114"/>
    </location>
</feature>
<feature type="helix" evidence="7">
    <location>
        <begin position="119"/>
        <end position="121"/>
    </location>
</feature>
<feature type="strand" evidence="7">
    <location>
        <begin position="128"/>
        <end position="131"/>
    </location>
</feature>
<feature type="helix" evidence="7">
    <location>
        <begin position="137"/>
        <end position="149"/>
    </location>
</feature>
<feature type="strand" evidence="7">
    <location>
        <begin position="153"/>
        <end position="156"/>
    </location>
</feature>
<feature type="strand" evidence="7">
    <location>
        <begin position="159"/>
        <end position="161"/>
    </location>
</feature>
<feature type="helix" evidence="7">
    <location>
        <begin position="162"/>
        <end position="168"/>
    </location>
</feature>
<feature type="strand" evidence="7">
    <location>
        <begin position="171"/>
        <end position="177"/>
    </location>
</feature>
<feature type="helix" evidence="7">
    <location>
        <begin position="179"/>
        <end position="181"/>
    </location>
</feature>
<feature type="helix" evidence="7">
    <location>
        <begin position="182"/>
        <end position="189"/>
    </location>
</feature>
<feature type="turn" evidence="7">
    <location>
        <begin position="190"/>
        <end position="192"/>
    </location>
</feature>
<feature type="strand" evidence="7">
    <location>
        <begin position="193"/>
        <end position="201"/>
    </location>
</feature>
<feature type="helix" evidence="7">
    <location>
        <begin position="204"/>
        <end position="232"/>
    </location>
</feature>
<feature type="helix" evidence="7">
    <location>
        <begin position="237"/>
        <end position="245"/>
    </location>
</feature>
<feature type="helix" evidence="7">
    <location>
        <begin position="252"/>
        <end position="256"/>
    </location>
</feature>
<feature type="turn" evidence="7">
    <location>
        <begin position="261"/>
        <end position="263"/>
    </location>
</feature>
<feature type="strand" evidence="7">
    <location>
        <begin position="265"/>
        <end position="267"/>
    </location>
</feature>
<feature type="helix" evidence="7">
    <location>
        <begin position="268"/>
        <end position="271"/>
    </location>
</feature>
<feature type="strand" evidence="7">
    <location>
        <begin position="275"/>
        <end position="278"/>
    </location>
</feature>
<feature type="helix" evidence="7">
    <location>
        <begin position="279"/>
        <end position="295"/>
    </location>
</feature>
<feature type="helix" evidence="7">
    <location>
        <begin position="301"/>
        <end position="314"/>
    </location>
</feature>
<feature type="turn" evidence="7">
    <location>
        <begin position="315"/>
        <end position="317"/>
    </location>
</feature>
<feature type="helix" evidence="7">
    <location>
        <begin position="323"/>
        <end position="325"/>
    </location>
</feature>
<feature type="helix" evidence="7">
    <location>
        <begin position="326"/>
        <end position="330"/>
    </location>
</feature>
<evidence type="ECO:0000250" key="1"/>
<evidence type="ECO:0000250" key="2">
    <source>
        <dbReference type="UniProtKB" id="Q99L13"/>
    </source>
</evidence>
<evidence type="ECO:0000269" key="3">
    <source>
    </source>
</evidence>
<evidence type="ECO:0000269" key="4">
    <source>
    </source>
</evidence>
<evidence type="ECO:0000269" key="5">
    <source ref="12"/>
</evidence>
<evidence type="ECO:0000305" key="6"/>
<evidence type="ECO:0007829" key="7">
    <source>
        <dbReference type="PDB" id="2GF2"/>
    </source>
</evidence>
<comment type="catalytic activity">
    <reaction evidence="3">
        <text>3-hydroxy-2-methylpropanoate + NAD(+) = 2-methyl-3-oxopropanoate + NADH + H(+)</text>
        <dbReference type="Rhea" id="RHEA:17681"/>
        <dbReference type="ChEBI" id="CHEBI:11805"/>
        <dbReference type="ChEBI" id="CHEBI:15378"/>
        <dbReference type="ChEBI" id="CHEBI:57540"/>
        <dbReference type="ChEBI" id="CHEBI:57700"/>
        <dbReference type="ChEBI" id="CHEBI:57945"/>
        <dbReference type="EC" id="1.1.1.31"/>
    </reaction>
</comment>
<comment type="pathway">
    <text evidence="3">Amino-acid degradation; L-valine degradation.</text>
</comment>
<comment type="subunit">
    <text evidence="1">Homodimer.</text>
</comment>
<comment type="interaction">
    <interactant intactId="EBI-11427100">
        <id>P31937</id>
    </interactant>
    <interactant intactId="EBI-10225815">
        <id>Q08AM2</id>
        <label>ADAM33</label>
    </interactant>
    <organismsDiffer>false</organismsDiffer>
    <experiments>3</experiments>
</comment>
<comment type="interaction">
    <interactant intactId="EBI-11427100">
        <id>P31937</id>
    </interactant>
    <interactant intactId="EBI-11522760">
        <id>Q6RW13-2</id>
        <label>AGTRAP</label>
    </interactant>
    <organismsDiffer>false</organismsDiffer>
    <experiments>3</experiments>
</comment>
<comment type="interaction">
    <interactant intactId="EBI-11427100">
        <id>P31937</id>
    </interactant>
    <interactant intactId="EBI-11957045">
        <id>Q9NVV5-2</id>
        <label>AIG1</label>
    </interactant>
    <organismsDiffer>false</organismsDiffer>
    <experiments>3</experiments>
</comment>
<comment type="interaction">
    <interactant intactId="EBI-11427100">
        <id>P31937</id>
    </interactant>
    <interactant intactId="EBI-17435683">
        <id>Q99218-1</id>
        <label>AMELY</label>
    </interactant>
    <organismsDiffer>false</organismsDiffer>
    <experiments>3</experiments>
</comment>
<comment type="interaction">
    <interactant intactId="EBI-11427100">
        <id>P31937</id>
    </interactant>
    <interactant intactId="EBI-2808854">
        <id>Q92482</id>
        <label>AQP3</label>
    </interactant>
    <organismsDiffer>false</organismsDiffer>
    <experiments>3</experiments>
</comment>
<comment type="interaction">
    <interactant intactId="EBI-11427100">
        <id>P31937</id>
    </interactant>
    <interactant intactId="EBI-1172335">
        <id>P07306</id>
        <label>ASGR1</label>
    </interactant>
    <organismsDiffer>false</organismsDiffer>
    <experiments>3</experiments>
</comment>
<comment type="interaction">
    <interactant intactId="EBI-11427100">
        <id>P31937</id>
    </interactant>
    <interactant intactId="EBI-12822627">
        <id>O14523</id>
        <label>C2CD2L</label>
    </interactant>
    <organismsDiffer>false</organismsDiffer>
    <experiments>3</experiments>
</comment>
<comment type="interaction">
    <interactant intactId="EBI-11427100">
        <id>P31937</id>
    </interactant>
    <interactant intactId="EBI-3913685">
        <id>O95674</id>
        <label>CDS2</label>
    </interactant>
    <organismsDiffer>false</organismsDiffer>
    <experiments>3</experiments>
</comment>
<comment type="interaction">
    <interactant intactId="EBI-11427100">
        <id>P31937</id>
    </interactant>
    <interactant intactId="EBI-15839595">
        <id>Q6UVW9</id>
        <label>CLEC2A</label>
    </interactant>
    <organismsDiffer>false</organismsDiffer>
    <experiments>3</experiments>
</comment>
<comment type="interaction">
    <interactant intactId="EBI-11427100">
        <id>P31937</id>
    </interactant>
    <interactant intactId="EBI-2807956">
        <id>Q96FZ5</id>
        <label>CMTM7</label>
    </interactant>
    <organismsDiffer>false</organismsDiffer>
    <experiments>3</experiments>
</comment>
<comment type="interaction">
    <interactant intactId="EBI-11427100">
        <id>P31937</id>
    </interactant>
    <interactant intactId="EBI-12815321">
        <id>Q6PI25</id>
        <label>CNIH2</label>
    </interactant>
    <organismsDiffer>false</organismsDiffer>
    <experiments>3</experiments>
</comment>
<comment type="interaction">
    <interactant intactId="EBI-11427100">
        <id>P31937</id>
    </interactant>
    <interactant intactId="EBI-372265">
        <id>P21964</id>
        <label>COMT</label>
    </interactant>
    <organismsDiffer>false</organismsDiffer>
    <experiments>3</experiments>
</comment>
<comment type="interaction">
    <interactant intactId="EBI-11427100">
        <id>P31937</id>
    </interactant>
    <interactant intactId="EBI-1753674">
        <id>P52803</id>
        <label>EFNA5</label>
    </interactant>
    <organismsDiffer>false</organismsDiffer>
    <experiments>3</experiments>
</comment>
<comment type="interaction">
    <interactant intactId="EBI-11427100">
        <id>P31937</id>
    </interactant>
    <interactant intactId="EBI-10976398">
        <id>Q7Z2K6</id>
        <label>ERMP1</label>
    </interactant>
    <organismsDiffer>false</organismsDiffer>
    <experiments>3</experiments>
</comment>
<comment type="interaction">
    <interactant intactId="EBI-11427100">
        <id>P31937</id>
    </interactant>
    <interactant intactId="EBI-4401517">
        <id>O14653</id>
        <label>GOSR2</label>
    </interactant>
    <organismsDiffer>false</organismsDiffer>
    <experiments>3</experiments>
</comment>
<comment type="interaction">
    <interactant intactId="EBI-11427100">
        <id>P31937</id>
    </interactant>
    <interactant intactId="EBI-3932027">
        <id>P21145</id>
        <label>MAL</label>
    </interactant>
    <organismsDiffer>false</organismsDiffer>
    <experiments>3</experiments>
</comment>
<comment type="interaction">
    <interactant intactId="EBI-11427100">
        <id>P31937</id>
    </interactant>
    <interactant intactId="EBI-1246182">
        <id>Q9NX14</id>
        <label>NDUFB11</label>
    </interactant>
    <organismsDiffer>false</organismsDiffer>
    <experiments>3</experiments>
</comment>
<comment type="interaction">
    <interactant intactId="EBI-11427100">
        <id>P31937</id>
    </interactant>
    <interactant intactId="EBI-465167">
        <id>P09466</id>
        <label>PAEP</label>
    </interactant>
    <organismsDiffer>false</organismsDiffer>
    <experiments>3</experiments>
</comment>
<comment type="interaction">
    <interactant intactId="EBI-11427100">
        <id>P31937</id>
    </interactant>
    <interactant intactId="EBI-692836">
        <id>P26678</id>
        <label>PLN</label>
    </interactant>
    <organismsDiffer>false</organismsDiffer>
    <experiments>3</experiments>
</comment>
<comment type="interaction">
    <interactant intactId="EBI-11427100">
        <id>P31937</id>
    </interactant>
    <interactant intactId="EBI-14210385">
        <id>Q59EV6</id>
        <label>PPGB</label>
    </interactant>
    <organismsDiffer>false</organismsDiffer>
    <experiments>3</experiments>
</comment>
<comment type="interaction">
    <interactant intactId="EBI-11427100">
        <id>P31937</id>
    </interactant>
    <interactant intactId="EBI-2506064">
        <id>O60831</id>
        <label>PRAF2</label>
    </interactant>
    <organismsDiffer>false</organismsDiffer>
    <experiments>3</experiments>
</comment>
<comment type="interaction">
    <interactant intactId="EBI-11427100">
        <id>P31937</id>
    </interactant>
    <interactant intactId="EBI-14199621">
        <id>Q13635-3</id>
        <label>PTCH1</label>
    </interactant>
    <organismsDiffer>false</organismsDiffer>
    <experiments>3</experiments>
</comment>
<comment type="interaction">
    <interactant intactId="EBI-11427100">
        <id>P31937</id>
    </interactant>
    <interactant intactId="EBI-10244780">
        <id>Q5QGT7</id>
        <label>RTP2</label>
    </interactant>
    <organismsDiffer>false</organismsDiffer>
    <experiments>3</experiments>
</comment>
<comment type="interaction">
    <interactant intactId="EBI-11427100">
        <id>P31937</id>
    </interactant>
    <interactant intactId="EBI-1564650">
        <id>Q14108</id>
        <label>SCARB2</label>
    </interactant>
    <organismsDiffer>false</organismsDiffer>
    <experiments>3</experiments>
</comment>
<comment type="interaction">
    <interactant intactId="EBI-11427100">
        <id>P31937</id>
    </interactant>
    <interactant intactId="EBI-1058865">
        <id>O75396</id>
        <label>SEC22B</label>
    </interactant>
    <organismsDiffer>false</organismsDiffer>
    <experiments>3</experiments>
</comment>
<comment type="interaction">
    <interactant intactId="EBI-11427100">
        <id>P31937</id>
    </interactant>
    <interactant intactId="EBI-4402330">
        <id>O95562</id>
        <label>SFT2D2</label>
    </interactant>
    <organismsDiffer>false</organismsDiffer>
    <experiments>3</experiments>
</comment>
<comment type="interaction">
    <interactant intactId="EBI-11427100">
        <id>P31937</id>
    </interactant>
    <interactant intactId="EBI-11957067">
        <id>Q6UX34</id>
        <label>SNORC</label>
    </interactant>
    <organismsDiffer>false</organismsDiffer>
    <experiments>3</experiments>
</comment>
<comment type="interaction">
    <interactant intactId="EBI-11427100">
        <id>P31937</id>
    </interactant>
    <interactant intactId="EBI-355727">
        <id>P02786</id>
        <label>TFRC</label>
    </interactant>
    <organismsDiffer>false</organismsDiffer>
    <experiments>3</experiments>
</comment>
<comment type="interaction">
    <interactant intactId="EBI-11427100">
        <id>P31937</id>
    </interactant>
    <interactant intactId="EBI-13082040">
        <id>Q9BZW4</id>
        <label>TM6SF2</label>
    </interactant>
    <organismsDiffer>false</organismsDiffer>
    <experiments>3</experiments>
</comment>
<comment type="interaction">
    <interactant intactId="EBI-11427100">
        <id>P31937</id>
    </interactant>
    <interactant intactId="EBI-8638294">
        <id>Q9NUH8</id>
        <label>TMEM14B</label>
    </interactant>
    <organismsDiffer>false</organismsDiffer>
    <experiments>3</experiments>
</comment>
<comment type="interaction">
    <interactant intactId="EBI-11427100">
        <id>P31937</id>
    </interactant>
    <interactant intactId="EBI-347385">
        <id>Q9H0R3</id>
        <label>TMEM222</label>
    </interactant>
    <organismsDiffer>false</organismsDiffer>
    <experiments>3</experiments>
</comment>
<comment type="interaction">
    <interactant intactId="EBI-11427100">
        <id>P31937</id>
    </interactant>
    <interactant intactId="EBI-2852148">
        <id>Q9H2L4</id>
        <label>TMEM60</label>
    </interactant>
    <organismsDiffer>false</organismsDiffer>
    <experiments>3</experiments>
</comment>
<comment type="interaction">
    <interactant intactId="EBI-11427100">
        <id>P31937</id>
    </interactant>
    <interactant intactId="EBI-2548832">
        <id>Q8N661</id>
        <label>TMEM86B</label>
    </interactant>
    <organismsDiffer>false</organismsDiffer>
    <experiments>3</experiments>
</comment>
<comment type="interaction">
    <interactant intactId="EBI-11427100">
        <id>P31937</id>
    </interactant>
    <interactant intactId="EBI-2819725">
        <id>Q9Y5Z9</id>
        <label>UBIAD1</label>
    </interactant>
    <organismsDiffer>false</organismsDiffer>
    <experiments>3</experiments>
</comment>
<comment type="interaction">
    <interactant intactId="EBI-11427100">
        <id>P31937</id>
    </interactant>
    <interactant intactId="EBI-520113">
        <id>P63027</id>
        <label>VAMP2</label>
    </interactant>
    <organismsDiffer>false</organismsDiffer>
    <experiments>3</experiments>
</comment>
<comment type="interaction">
    <interactant intactId="EBI-11427100">
        <id>P31937</id>
    </interactant>
    <interactant intactId="EBI-10191195">
        <id>O95183</id>
        <label>VAMP5</label>
    </interactant>
    <organismsDiffer>false</organismsDiffer>
    <experiments>3</experiments>
</comment>
<comment type="interaction">
    <interactant intactId="EBI-11427100">
        <id>P31937</id>
    </interactant>
    <interactant intactId="EBI-718439">
        <id>O95159</id>
        <label>ZFPL1</label>
    </interactant>
    <organismsDiffer>false</organismsDiffer>
    <experiments>3</experiments>
</comment>
<comment type="subcellular location">
    <subcellularLocation>
        <location>Mitochondrion</location>
    </subcellularLocation>
</comment>
<comment type="tissue specificity">
    <text evidence="3">Detected in skin fibroblasts.</text>
</comment>
<comment type="similarity">
    <text evidence="6">Belongs to the HIBADH-related family. 3-hydroxyisobutyrate dehydrogenase subfamily.</text>
</comment>